<gene>
    <name type="primary">Oprk1</name>
    <name type="synonym">Ror-d</name>
</gene>
<sequence>MESPIQIFRGEPGPTCAPSACLLPNSSSWFPNWAESDSNGSVGSEDQQLEPAHISPAIPVIITAVYSVVFVVGLVGNSLVMFVIIRYTKMKTATNIYIFNLALADALVTTTMPFQSAVYLMNSWPFGDVLCKIVISIDYYNMFTSIFTLTMMSVDRYIAVCHPVKALDFRTPLKAKIINICIWLLASSVGISAIVLGGTKVREDVDVIECSLQFPDDEYSWWDLFMKICVFVFAFVIPVLIIIVCYTLMILRLKSVRLLSGSREKDRNLRRITKLVLVVVAVFIICWTPIHIFILVEALGSTSHSTAVLSSYYFCIALGYTNSSLNPVLYAFLDENFKRCFRDFCFPIKMRMERQSTNRVRNTVQDPASMRDVGGMNKPV</sequence>
<name>OPRK_RAT</name>
<comment type="function">
    <text evidence="4 5">G-protein coupled opioid receptor that functions as a receptor for endogenous alpha-neoendorphins and dynorphins, but has low affinity for beta-endorphins. Also functions as a receptor for various synthetic opioids and for the psychoactive diterpene salvinorin A. Ligand binding causes a conformation change that triggers signaling via guanine nucleotide-binding proteins (G proteins) and modulates the activity of down-stream effectors, such as adenylate cyclase. Signaling leads to the inhibition of adenylate cyclase activity. Inhibits neurotransmitter release by reducing calcium ion currents and increasing potassium ion conductance. Plays a role in the perception of pain. Plays a role in mediating reduced physical activity upon treatment with synthetic opioids. Plays a role in the regulation of salivation in response to synthetic opioids. May play a role in arousal and regulation of autonomic and neuroendocrine functions.</text>
</comment>
<comment type="subunit">
    <text evidence="1">Interacts with NHERF1. Interacts with GABARAPL1 (By similarity).</text>
</comment>
<comment type="subcellular location">
    <subcellularLocation>
        <location evidence="5">Cell membrane</location>
        <topology evidence="5">Multi-pass membrane protein</topology>
    </subcellularLocation>
</comment>
<comment type="similarity">
    <text evidence="3">Belongs to the G-protein coupled receptor 1 family.</text>
</comment>
<reference key="1">
    <citation type="journal article" date="1993" name="Biochem. J.">
        <title>Molecular cloning of a rat kappa opioid receptor reveals sequence similarities to the mu and delta opioid receptors.</title>
        <authorList>
            <person name="Chen Y."/>
            <person name="Mestek A."/>
            <person name="Liu J."/>
            <person name="Yu L."/>
        </authorList>
    </citation>
    <scope>NUCLEOTIDE SEQUENCE [MRNA]</scope>
    <scope>FUNCTION</scope>
    <scope>SUBCELLULAR LOCATION</scope>
    <source>
        <tissue>Brain</tissue>
    </source>
</reference>
<reference key="2">
    <citation type="journal article" date="1993" name="FEBS Lett.">
        <title>Cloning and expression of a cDNA for the rat kappa-opioid receptor.</title>
        <authorList>
            <person name="Minami M."/>
            <person name="Toya T."/>
            <person name="Katao Y."/>
            <person name="Maekawa K."/>
            <person name="Nakamura S."/>
            <person name="Onogi T."/>
            <person name="Kaneko S."/>
            <person name="Satoh M."/>
        </authorList>
    </citation>
    <scope>NUCLEOTIDE SEQUENCE [GENOMIC DNA]</scope>
</reference>
<reference key="3">
    <citation type="journal article" date="1993" name="Biochem. J.">
        <title>Molecular cloning and expression of a rat kappa opioid receptor.</title>
        <authorList>
            <person name="Li S."/>
            <person name="Zhu J."/>
            <person name="Chen C."/>
            <person name="Chen Y.-W."/>
            <person name="Deriel J.K."/>
            <person name="Ashby B."/>
            <person name="Liu-Chen L.-Y."/>
        </authorList>
    </citation>
    <scope>NUCLEOTIDE SEQUENCE [MRNA]</scope>
    <source>
        <strain>Sprague-Dawley</strain>
        <tissue>Brain</tissue>
    </source>
</reference>
<reference key="4">
    <citation type="journal article" date="1993" name="Proc. Natl. Acad. Sci. U.S.A.">
        <title>Cloning and pharmacological characterization of a rat kappa opioid receptor.</title>
        <authorList>
            <person name="Meng F."/>
            <person name="Xie G.-X."/>
            <person name="Thompson R.C."/>
            <person name="Mansour A."/>
            <person name="Goldstein A."/>
            <person name="Watson S.J."/>
            <person name="Akil H."/>
        </authorList>
    </citation>
    <scope>NUCLEOTIDE SEQUENCE [MRNA]</scope>
    <source>
        <strain>Sprague-Dawley</strain>
        <tissue>Brain</tissue>
    </source>
</reference>
<reference key="5">
    <citation type="journal article" date="1993" name="FEBS Lett.">
        <title>cDNA cloning and pharmacological characterization of an opioid receptor with high affinities for kappa-subtype-selective ligands.</title>
        <authorList>
            <person name="Nishi M."/>
            <person name="Takeshima H."/>
            <person name="Fukuda K."/>
            <person name="Kato S."/>
            <person name="Mori K."/>
        </authorList>
    </citation>
    <scope>NUCLEOTIDE SEQUENCE [MRNA]</scope>
    <source>
        <strain>Wistar</strain>
        <tissue>Brain</tissue>
    </source>
</reference>
<reference key="6">
    <citation type="journal article" date="1995" name="J. Biol. Chem.">
        <title>Structure and expression of a rat kappa opioid receptor gene.</title>
        <authorList>
            <person name="Yakovlev A.G."/>
            <person name="Krueger K.E."/>
            <person name="Faden A.I."/>
        </authorList>
    </citation>
    <scope>NUCLEOTIDE SEQUENCE [GENOMIC DNA]</scope>
    <source>
        <strain>Sprague-Dawley</strain>
    </source>
</reference>
<reference key="7">
    <citation type="journal article" date="2010" name="Psychopharmacology">
        <title>Role of kappa-opioid receptors in the effects of salvinorin A and ketamine on attention in rats.</title>
        <authorList>
            <person name="Nemeth C.L."/>
            <person name="Paine T.A."/>
            <person name="Rittiner J.E."/>
            <person name="Beguin C."/>
            <person name="Carroll F.I."/>
            <person name="Roth B.L."/>
            <person name="Cohen B.M."/>
            <person name="Carlezon W.A. Jr."/>
        </authorList>
    </citation>
    <scope>FUNCTION</scope>
</reference>
<organism>
    <name type="scientific">Rattus norvegicus</name>
    <name type="common">Rat</name>
    <dbReference type="NCBI Taxonomy" id="10116"/>
    <lineage>
        <taxon>Eukaryota</taxon>
        <taxon>Metazoa</taxon>
        <taxon>Chordata</taxon>
        <taxon>Craniata</taxon>
        <taxon>Vertebrata</taxon>
        <taxon>Euteleostomi</taxon>
        <taxon>Mammalia</taxon>
        <taxon>Eutheria</taxon>
        <taxon>Euarchontoglires</taxon>
        <taxon>Glires</taxon>
        <taxon>Rodentia</taxon>
        <taxon>Myomorpha</taxon>
        <taxon>Muroidea</taxon>
        <taxon>Muridae</taxon>
        <taxon>Murinae</taxon>
        <taxon>Rattus</taxon>
    </lineage>
</organism>
<evidence type="ECO:0000250" key="1"/>
<evidence type="ECO:0000255" key="2"/>
<evidence type="ECO:0000255" key="3">
    <source>
        <dbReference type="PROSITE-ProRule" id="PRU00521"/>
    </source>
</evidence>
<evidence type="ECO:0000269" key="4">
    <source>
    </source>
</evidence>
<evidence type="ECO:0000269" key="5">
    <source>
    </source>
</evidence>
<evidence type="ECO:0000305" key="6"/>
<dbReference type="EMBL" id="L22001">
    <property type="protein sequence ID" value="AAA41495.1"/>
    <property type="molecule type" value="mRNA"/>
</dbReference>
<dbReference type="EMBL" id="D16829">
    <property type="protein sequence ID" value="BAA04109.1"/>
    <property type="molecule type" value="mRNA"/>
</dbReference>
<dbReference type="EMBL" id="L22536">
    <property type="protein sequence ID" value="AAA41496.1"/>
    <property type="molecule type" value="mRNA"/>
</dbReference>
<dbReference type="EMBL" id="U00442">
    <property type="protein sequence ID" value="AAA18261.1"/>
    <property type="molecule type" value="mRNA"/>
</dbReference>
<dbReference type="EMBL" id="D16534">
    <property type="protein sequence ID" value="BAA03971.1"/>
    <property type="molecule type" value="mRNA"/>
</dbReference>
<dbReference type="EMBL" id="U17995">
    <property type="protein sequence ID" value="AAC53249.1"/>
    <property type="molecule type" value="Genomic_DNA"/>
</dbReference>
<dbReference type="EMBL" id="U17993">
    <property type="protein sequence ID" value="AAC53249.1"/>
    <property type="status" value="JOINED"/>
    <property type="molecule type" value="Genomic_DNA"/>
</dbReference>
<dbReference type="EMBL" id="U17994">
    <property type="protein sequence ID" value="AAC53249.1"/>
    <property type="status" value="JOINED"/>
    <property type="molecule type" value="Genomic_DNA"/>
</dbReference>
<dbReference type="PIR" id="S36143">
    <property type="entry name" value="S36143"/>
</dbReference>
<dbReference type="RefSeq" id="NP_058863.1">
    <property type="nucleotide sequence ID" value="NM_017167.3"/>
</dbReference>
<dbReference type="SMR" id="P34975"/>
<dbReference type="CORUM" id="P34975"/>
<dbReference type="FunCoup" id="P34975">
    <property type="interactions" value="155"/>
</dbReference>
<dbReference type="IntAct" id="P34975">
    <property type="interactions" value="1"/>
</dbReference>
<dbReference type="STRING" id="10116.ENSRNOP00000010255"/>
<dbReference type="BindingDB" id="P34975"/>
<dbReference type="ChEMBL" id="CHEMBL3614"/>
<dbReference type="DrugCentral" id="P34975"/>
<dbReference type="GuidetoPHARMACOLOGY" id="318"/>
<dbReference type="GlyCosmos" id="P34975">
    <property type="glycosylation" value="2 sites, No reported glycans"/>
</dbReference>
<dbReference type="GlyGen" id="P34975">
    <property type="glycosylation" value="3 sites"/>
</dbReference>
<dbReference type="iPTMnet" id="P34975"/>
<dbReference type="PhosphoSitePlus" id="P34975"/>
<dbReference type="PaxDb" id="10116-ENSRNOP00000010255"/>
<dbReference type="Ensembl" id="ENSRNOT00000010254.4">
    <property type="protein sequence ID" value="ENSRNOP00000010255.1"/>
    <property type="gene ID" value="ENSRNOG00000007647.4"/>
</dbReference>
<dbReference type="GeneID" id="29335"/>
<dbReference type="KEGG" id="rno:29335"/>
<dbReference type="UCSC" id="RGD:69426">
    <property type="organism name" value="rat"/>
</dbReference>
<dbReference type="AGR" id="RGD:69426"/>
<dbReference type="CTD" id="4986"/>
<dbReference type="RGD" id="69426">
    <property type="gene designation" value="Oprk1"/>
</dbReference>
<dbReference type="eggNOG" id="KOG3656">
    <property type="taxonomic scope" value="Eukaryota"/>
</dbReference>
<dbReference type="GeneTree" id="ENSGT00940000157341"/>
<dbReference type="HOGENOM" id="CLU_009579_8_1_1"/>
<dbReference type="InParanoid" id="P34975"/>
<dbReference type="OMA" id="DTFMKIC"/>
<dbReference type="OrthoDB" id="6076970at2759"/>
<dbReference type="PhylomeDB" id="P34975"/>
<dbReference type="TreeFam" id="TF315737"/>
<dbReference type="Reactome" id="R-RNO-375276">
    <property type="pathway name" value="Peptide ligand-binding receptors"/>
</dbReference>
<dbReference type="Reactome" id="R-RNO-418594">
    <property type="pathway name" value="G alpha (i) signalling events"/>
</dbReference>
<dbReference type="PRO" id="PR:P34975"/>
<dbReference type="Proteomes" id="UP000002494">
    <property type="component" value="Chromosome 5"/>
</dbReference>
<dbReference type="Bgee" id="ENSRNOG00000007647">
    <property type="expression patterns" value="Expressed in thymus and 3 other cell types or tissues"/>
</dbReference>
<dbReference type="GO" id="GO:0043679">
    <property type="term" value="C:axon terminus"/>
    <property type="evidence" value="ECO:0000314"/>
    <property type="project" value="RGD"/>
</dbReference>
<dbReference type="GO" id="GO:0005829">
    <property type="term" value="C:cytosol"/>
    <property type="evidence" value="ECO:0007669"/>
    <property type="project" value="Ensembl"/>
</dbReference>
<dbReference type="GO" id="GO:0030425">
    <property type="term" value="C:dendrite"/>
    <property type="evidence" value="ECO:0000314"/>
    <property type="project" value="RGD"/>
</dbReference>
<dbReference type="GO" id="GO:0016020">
    <property type="term" value="C:membrane"/>
    <property type="evidence" value="ECO:0000250"/>
    <property type="project" value="UniProtKB"/>
</dbReference>
<dbReference type="GO" id="GO:0005739">
    <property type="term" value="C:mitochondrion"/>
    <property type="evidence" value="ECO:0000314"/>
    <property type="project" value="RGD"/>
</dbReference>
<dbReference type="GO" id="GO:0043005">
    <property type="term" value="C:neuron projection"/>
    <property type="evidence" value="ECO:0000318"/>
    <property type="project" value="GO_Central"/>
</dbReference>
<dbReference type="GO" id="GO:0043025">
    <property type="term" value="C:neuronal cell body"/>
    <property type="evidence" value="ECO:0000314"/>
    <property type="project" value="RGD"/>
</dbReference>
<dbReference type="GO" id="GO:0005654">
    <property type="term" value="C:nucleoplasm"/>
    <property type="evidence" value="ECO:0007669"/>
    <property type="project" value="Ensembl"/>
</dbReference>
<dbReference type="GO" id="GO:0043204">
    <property type="term" value="C:perikaryon"/>
    <property type="evidence" value="ECO:0000314"/>
    <property type="project" value="RGD"/>
</dbReference>
<dbReference type="GO" id="GO:0005886">
    <property type="term" value="C:plasma membrane"/>
    <property type="evidence" value="ECO:0000250"/>
    <property type="project" value="UniProtKB"/>
</dbReference>
<dbReference type="GO" id="GO:0045211">
    <property type="term" value="C:postsynaptic membrane"/>
    <property type="evidence" value="ECO:0000314"/>
    <property type="project" value="SynGO"/>
</dbReference>
<dbReference type="GO" id="GO:0042734">
    <property type="term" value="C:presynaptic membrane"/>
    <property type="evidence" value="ECO:0000314"/>
    <property type="project" value="SynGO"/>
</dbReference>
<dbReference type="GO" id="GO:0042383">
    <property type="term" value="C:sarcolemma"/>
    <property type="evidence" value="ECO:0000314"/>
    <property type="project" value="RGD"/>
</dbReference>
<dbReference type="GO" id="GO:0016529">
    <property type="term" value="C:sarcoplasmic reticulum"/>
    <property type="evidence" value="ECO:0000314"/>
    <property type="project" value="RGD"/>
</dbReference>
<dbReference type="GO" id="GO:0030672">
    <property type="term" value="C:synaptic vesicle membrane"/>
    <property type="evidence" value="ECO:0000314"/>
    <property type="project" value="SynGO"/>
</dbReference>
<dbReference type="GO" id="GO:0030315">
    <property type="term" value="C:T-tubule"/>
    <property type="evidence" value="ECO:0000314"/>
    <property type="project" value="RGD"/>
</dbReference>
<dbReference type="GO" id="GO:0038048">
    <property type="term" value="F:dynorphin receptor activity"/>
    <property type="evidence" value="ECO:0000250"/>
    <property type="project" value="UniProtKB"/>
</dbReference>
<dbReference type="GO" id="GO:0004985">
    <property type="term" value="F:G protein-coupled opioid receptor activity"/>
    <property type="evidence" value="ECO:0000250"/>
    <property type="project" value="UniProtKB"/>
</dbReference>
<dbReference type="GO" id="GO:0042923">
    <property type="term" value="F:neuropeptide binding"/>
    <property type="evidence" value="ECO:0000318"/>
    <property type="project" value="GO_Central"/>
</dbReference>
<dbReference type="GO" id="GO:0033612">
    <property type="term" value="F:receptor serine/threonine kinase binding"/>
    <property type="evidence" value="ECO:0000353"/>
    <property type="project" value="RGD"/>
</dbReference>
<dbReference type="GO" id="GO:0031635">
    <property type="term" value="P:adenylate cyclase-inhibiting opioid receptor signaling pathway"/>
    <property type="evidence" value="ECO:0000250"/>
    <property type="project" value="UniProtKB"/>
</dbReference>
<dbReference type="GO" id="GO:0048148">
    <property type="term" value="P:behavioral response to cocaine"/>
    <property type="evidence" value="ECO:0000315"/>
    <property type="project" value="RGD"/>
</dbReference>
<dbReference type="GO" id="GO:0071333">
    <property type="term" value="P:cellular response to glucose stimulus"/>
    <property type="evidence" value="ECO:0000314"/>
    <property type="project" value="RGD"/>
</dbReference>
<dbReference type="GO" id="GO:0071222">
    <property type="term" value="P:cellular response to lipopolysaccharide"/>
    <property type="evidence" value="ECO:0000270"/>
    <property type="project" value="RGD"/>
</dbReference>
<dbReference type="GO" id="GO:1990708">
    <property type="term" value="P:conditioned place preference"/>
    <property type="evidence" value="ECO:0000315"/>
    <property type="project" value="RGD"/>
</dbReference>
<dbReference type="GO" id="GO:0051607">
    <property type="term" value="P:defense response to virus"/>
    <property type="evidence" value="ECO:0000266"/>
    <property type="project" value="RGD"/>
</dbReference>
<dbReference type="GO" id="GO:0042755">
    <property type="term" value="P:eating behavior"/>
    <property type="evidence" value="ECO:0000315"/>
    <property type="project" value="RGD"/>
</dbReference>
<dbReference type="GO" id="GO:0044849">
    <property type="term" value="P:estrous cycle"/>
    <property type="evidence" value="ECO:0000270"/>
    <property type="project" value="RGD"/>
</dbReference>
<dbReference type="GO" id="GO:0038003">
    <property type="term" value="P:G protein-coupled opioid receptor signaling pathway"/>
    <property type="evidence" value="ECO:0000266"/>
    <property type="project" value="RGD"/>
</dbReference>
<dbReference type="GO" id="GO:0006955">
    <property type="term" value="P:immune response"/>
    <property type="evidence" value="ECO:0000266"/>
    <property type="project" value="RGD"/>
</dbReference>
<dbReference type="GO" id="GO:0007626">
    <property type="term" value="P:locomotory behavior"/>
    <property type="evidence" value="ECO:0000250"/>
    <property type="project" value="UniProtKB"/>
</dbReference>
<dbReference type="GO" id="GO:0042711">
    <property type="term" value="P:maternal behavior"/>
    <property type="evidence" value="ECO:0000314"/>
    <property type="project" value="RGD"/>
</dbReference>
<dbReference type="GO" id="GO:0033685">
    <property type="term" value="P:negative regulation of luteinizing hormone secretion"/>
    <property type="evidence" value="ECO:0000315"/>
    <property type="project" value="RGD"/>
</dbReference>
<dbReference type="GO" id="GO:0007218">
    <property type="term" value="P:neuropeptide signaling pathway"/>
    <property type="evidence" value="ECO:0000318"/>
    <property type="project" value="GO_Central"/>
</dbReference>
<dbReference type="GO" id="GO:0007200">
    <property type="term" value="P:phospholipase C-activating G protein-coupled receptor signaling pathway"/>
    <property type="evidence" value="ECO:0000314"/>
    <property type="project" value="UniProtKB"/>
</dbReference>
<dbReference type="GO" id="GO:0033603">
    <property type="term" value="P:positive regulation of dopamine secretion"/>
    <property type="evidence" value="ECO:0000314"/>
    <property type="project" value="RGD"/>
</dbReference>
<dbReference type="GO" id="GO:1904000">
    <property type="term" value="P:positive regulation of eating behavior"/>
    <property type="evidence" value="ECO:0000315"/>
    <property type="project" value="RGD"/>
</dbReference>
<dbReference type="GO" id="GO:1900745">
    <property type="term" value="P:positive regulation of p38MAPK cascade"/>
    <property type="evidence" value="ECO:0000314"/>
    <property type="project" value="RGD"/>
</dbReference>
<dbReference type="GO" id="GO:1901381">
    <property type="term" value="P:positive regulation of potassium ion transmembrane transport"/>
    <property type="evidence" value="ECO:0000314"/>
    <property type="project" value="RGD"/>
</dbReference>
<dbReference type="GO" id="GO:0046877">
    <property type="term" value="P:regulation of saliva secretion"/>
    <property type="evidence" value="ECO:0000250"/>
    <property type="project" value="UniProtKB"/>
</dbReference>
<dbReference type="GO" id="GO:1903937">
    <property type="term" value="P:response to acrylamide"/>
    <property type="evidence" value="ECO:0000270"/>
    <property type="project" value="RGD"/>
</dbReference>
<dbReference type="GO" id="GO:0042220">
    <property type="term" value="P:response to cocaine"/>
    <property type="evidence" value="ECO:0000270"/>
    <property type="project" value="RGD"/>
</dbReference>
<dbReference type="GO" id="GO:0043627">
    <property type="term" value="P:response to estrogen"/>
    <property type="evidence" value="ECO:0000270"/>
    <property type="project" value="RGD"/>
</dbReference>
<dbReference type="GO" id="GO:0045471">
    <property type="term" value="P:response to ethanol"/>
    <property type="evidence" value="ECO:0000270"/>
    <property type="project" value="RGD"/>
</dbReference>
<dbReference type="GO" id="GO:0032868">
    <property type="term" value="P:response to insulin"/>
    <property type="evidence" value="ECO:0000314"/>
    <property type="project" value="RGD"/>
</dbReference>
<dbReference type="GO" id="GO:0035094">
    <property type="term" value="P:response to nicotine"/>
    <property type="evidence" value="ECO:0000270"/>
    <property type="project" value="RGD"/>
</dbReference>
<dbReference type="GO" id="GO:0019233">
    <property type="term" value="P:sensory perception of pain"/>
    <property type="evidence" value="ECO:0000250"/>
    <property type="project" value="UniProtKB"/>
</dbReference>
<dbReference type="GO" id="GO:0050951">
    <property type="term" value="P:sensory perception of temperature stimulus"/>
    <property type="evidence" value="ECO:0000315"/>
    <property type="project" value="RGD"/>
</dbReference>
<dbReference type="CDD" id="cd15091">
    <property type="entry name" value="7tmA_Kappa_opioid_R"/>
    <property type="match status" value="1"/>
</dbReference>
<dbReference type="FunFam" id="1.20.1070.10:FF:000014">
    <property type="entry name" value="Kappa-type opioid receptor 1"/>
    <property type="match status" value="1"/>
</dbReference>
<dbReference type="Gene3D" id="1.20.1070.10">
    <property type="entry name" value="Rhodopsin 7-helix transmembrane proteins"/>
    <property type="match status" value="1"/>
</dbReference>
<dbReference type="InterPro" id="IPR000276">
    <property type="entry name" value="GPCR_Rhodpsn"/>
</dbReference>
<dbReference type="InterPro" id="IPR017452">
    <property type="entry name" value="GPCR_Rhodpsn_7TM"/>
</dbReference>
<dbReference type="InterPro" id="IPR000452">
    <property type="entry name" value="Kappa_opi_rcpt"/>
</dbReference>
<dbReference type="InterPro" id="IPR001418">
    <property type="entry name" value="Opioid_rcpt"/>
</dbReference>
<dbReference type="PANTHER" id="PTHR24229:SF1">
    <property type="entry name" value="KAPPA-TYPE OPIOID RECEPTOR"/>
    <property type="match status" value="1"/>
</dbReference>
<dbReference type="PANTHER" id="PTHR24229">
    <property type="entry name" value="NEUROPEPTIDES RECEPTOR"/>
    <property type="match status" value="1"/>
</dbReference>
<dbReference type="Pfam" id="PF00001">
    <property type="entry name" value="7tm_1"/>
    <property type="match status" value="1"/>
</dbReference>
<dbReference type="PRINTS" id="PR00237">
    <property type="entry name" value="GPCRRHODOPSN"/>
</dbReference>
<dbReference type="PRINTS" id="PR00532">
    <property type="entry name" value="KAPPAOPIOIDR"/>
</dbReference>
<dbReference type="PRINTS" id="PR00384">
    <property type="entry name" value="OPIOIDR"/>
</dbReference>
<dbReference type="SMART" id="SM01381">
    <property type="entry name" value="7TM_GPCR_Srsx"/>
    <property type="match status" value="1"/>
</dbReference>
<dbReference type="SUPFAM" id="SSF81321">
    <property type="entry name" value="Family A G protein-coupled receptor-like"/>
    <property type="match status" value="1"/>
</dbReference>
<dbReference type="PROSITE" id="PS00237">
    <property type="entry name" value="G_PROTEIN_RECEP_F1_1"/>
    <property type="match status" value="1"/>
</dbReference>
<dbReference type="PROSITE" id="PS50262">
    <property type="entry name" value="G_PROTEIN_RECEP_F1_2"/>
    <property type="match status" value="1"/>
</dbReference>
<proteinExistence type="evidence at transcript level"/>
<keyword id="KW-0085">Behavior</keyword>
<keyword id="KW-1003">Cell membrane</keyword>
<keyword id="KW-1015">Disulfide bond</keyword>
<keyword id="KW-0297">G-protein coupled receptor</keyword>
<keyword id="KW-0325">Glycoprotein</keyword>
<keyword id="KW-0449">Lipoprotein</keyword>
<keyword id="KW-0472">Membrane</keyword>
<keyword id="KW-0564">Palmitate</keyword>
<keyword id="KW-0675">Receptor</keyword>
<keyword id="KW-1185">Reference proteome</keyword>
<keyword id="KW-0807">Transducer</keyword>
<keyword id="KW-0812">Transmembrane</keyword>
<keyword id="KW-1133">Transmembrane helix</keyword>
<accession>P34975</accession>
<feature type="chain" id="PRO_0000069969" description="Kappa-type opioid receptor">
    <location>
        <begin position="1"/>
        <end position="380"/>
    </location>
</feature>
<feature type="topological domain" description="Extracellular" evidence="1">
    <location>
        <begin position="1"/>
        <end position="57"/>
    </location>
</feature>
<feature type="transmembrane region" description="Helical; Name=1" evidence="1">
    <location>
        <begin position="58"/>
        <end position="85"/>
    </location>
</feature>
<feature type="topological domain" description="Cytoplasmic" evidence="1">
    <location>
        <begin position="86"/>
        <end position="95"/>
    </location>
</feature>
<feature type="transmembrane region" description="Helical; Name=2" evidence="1">
    <location>
        <begin position="96"/>
        <end position="119"/>
    </location>
</feature>
<feature type="topological domain" description="Extracellular" evidence="1">
    <location>
        <begin position="120"/>
        <end position="132"/>
    </location>
</feature>
<feature type="transmembrane region" description="Helical; Name=3" evidence="1">
    <location>
        <begin position="133"/>
        <end position="154"/>
    </location>
</feature>
<feature type="topological domain" description="Cytoplasmic" evidence="1">
    <location>
        <begin position="155"/>
        <end position="173"/>
    </location>
</feature>
<feature type="transmembrane region" description="Helical; Name=4" evidence="1">
    <location>
        <begin position="174"/>
        <end position="196"/>
    </location>
</feature>
<feature type="topological domain" description="Extracellular" evidence="1">
    <location>
        <begin position="197"/>
        <end position="222"/>
    </location>
</feature>
<feature type="transmembrane region" description="Helical; Name=5" evidence="1">
    <location>
        <begin position="223"/>
        <end position="247"/>
    </location>
</feature>
<feature type="topological domain" description="Cytoplasmic" evidence="1">
    <location>
        <begin position="248"/>
        <end position="274"/>
    </location>
</feature>
<feature type="transmembrane region" description="Helical; Name=6" evidence="1">
    <location>
        <begin position="275"/>
        <end position="296"/>
    </location>
</feature>
<feature type="topological domain" description="Extracellular" evidence="1">
    <location>
        <begin position="297"/>
        <end position="311"/>
    </location>
</feature>
<feature type="transmembrane region" description="Helical; Name=7" evidence="1">
    <location>
        <begin position="312"/>
        <end position="333"/>
    </location>
</feature>
<feature type="topological domain" description="Cytoplasmic" evidence="1">
    <location>
        <begin position="334"/>
        <end position="380"/>
    </location>
</feature>
<feature type="lipid moiety-binding region" description="S-palmitoyl cysteine" evidence="2">
    <location>
        <position position="345"/>
    </location>
</feature>
<feature type="glycosylation site" description="N-linked (GlcNAc...) asparagine" evidence="1">
    <location>
        <position position="25"/>
    </location>
</feature>
<feature type="glycosylation site" description="N-linked (GlcNAc...) asparagine" evidence="1">
    <location>
        <position position="39"/>
    </location>
</feature>
<feature type="disulfide bond" evidence="3">
    <location>
        <begin position="131"/>
        <end position="210"/>
    </location>
</feature>
<feature type="sequence conflict" description="In Ref. 2; BAA04109." evidence="6" ref="2">
    <original>V</original>
    <variation>L</variation>
    <location>
        <position position="42"/>
    </location>
</feature>
<feature type="sequence conflict" description="In Ref. 3; AAA41496." evidence="6" ref="3">
    <original>C</original>
    <variation>Y</variation>
    <location>
        <position position="345"/>
    </location>
</feature>
<protein>
    <recommendedName>
        <fullName>Kappa-type opioid receptor</fullName>
        <shortName>K-OR-1</shortName>
        <shortName>KOR-1</shortName>
    </recommendedName>
</protein>